<comment type="function">
    <text evidence="1">Participates actively in the response to hyperosmotic and heat shock by preventing the aggregation of stress-denatured proteins and by disaggregating proteins, also in an autonomous, DnaK-independent fashion. Unfolded proteins bind initially to DnaJ; upon interaction with the DnaJ-bound protein, DnaK hydrolyzes its bound ATP, resulting in the formation of a stable complex. GrpE releases ADP from DnaK; ATP binding to DnaK triggers the release of the substrate protein, thus completing the reaction cycle. Several rounds of ATP-dependent interactions between DnaJ, DnaK and GrpE are required for fully efficient folding. Also involved, together with DnaK and GrpE, in the DNA replication of plasmids through activation of initiation proteins.</text>
</comment>
<comment type="cofactor">
    <cofactor evidence="1">
        <name>Zn(2+)</name>
        <dbReference type="ChEBI" id="CHEBI:29105"/>
    </cofactor>
    <text evidence="1">Binds 2 Zn(2+) ions per monomer.</text>
</comment>
<comment type="subunit">
    <text evidence="1">Homodimer.</text>
</comment>
<comment type="subcellular location">
    <subcellularLocation>
        <location evidence="1">Cytoplasm</location>
    </subcellularLocation>
</comment>
<comment type="domain">
    <text evidence="1">The J domain is necessary and sufficient to stimulate DnaK ATPase activity. Zinc center 1 plays an important role in the autonomous, DnaK-independent chaperone activity of DnaJ. Zinc center 2 is essential for interaction with DnaK and for DnaJ activity.</text>
</comment>
<comment type="similarity">
    <text evidence="1">Belongs to the DnaJ family.</text>
</comment>
<accession>Q9LCQ4</accession>
<organism>
    <name type="scientific">Brevibacillus choshinensis</name>
    <dbReference type="NCBI Taxonomy" id="54911"/>
    <lineage>
        <taxon>Bacteria</taxon>
        <taxon>Bacillati</taxon>
        <taxon>Bacillota</taxon>
        <taxon>Bacilli</taxon>
        <taxon>Bacillales</taxon>
        <taxon>Paenibacillaceae</taxon>
        <taxon>Brevibacillus</taxon>
    </lineage>
</organism>
<evidence type="ECO:0000255" key="1">
    <source>
        <dbReference type="HAMAP-Rule" id="MF_01152"/>
    </source>
</evidence>
<evidence type="ECO:0000256" key="2">
    <source>
        <dbReference type="SAM" id="MobiDB-lite"/>
    </source>
</evidence>
<feature type="chain" id="PRO_0000070739" description="Chaperone protein DnaJ">
    <location>
        <begin position="1"/>
        <end position="375"/>
    </location>
</feature>
<feature type="domain" description="J" evidence="1">
    <location>
        <begin position="4"/>
        <end position="68"/>
    </location>
</feature>
<feature type="repeat" description="CXXCXGXG motif">
    <location>
        <begin position="142"/>
        <end position="149"/>
    </location>
</feature>
<feature type="repeat" description="CXXCXGXG motif">
    <location>
        <begin position="159"/>
        <end position="166"/>
    </location>
</feature>
<feature type="repeat" description="CXXCXGXG motif">
    <location>
        <begin position="185"/>
        <end position="192"/>
    </location>
</feature>
<feature type="repeat" description="CXXCXGXG motif">
    <location>
        <begin position="199"/>
        <end position="206"/>
    </location>
</feature>
<feature type="zinc finger region" description="CR-type" evidence="1">
    <location>
        <begin position="129"/>
        <end position="211"/>
    </location>
</feature>
<feature type="region of interest" description="Disordered" evidence="2">
    <location>
        <begin position="349"/>
        <end position="375"/>
    </location>
</feature>
<feature type="binding site" evidence="1">
    <location>
        <position position="142"/>
    </location>
    <ligand>
        <name>Zn(2+)</name>
        <dbReference type="ChEBI" id="CHEBI:29105"/>
        <label>1</label>
    </ligand>
</feature>
<feature type="binding site" evidence="1">
    <location>
        <position position="145"/>
    </location>
    <ligand>
        <name>Zn(2+)</name>
        <dbReference type="ChEBI" id="CHEBI:29105"/>
        <label>1</label>
    </ligand>
</feature>
<feature type="binding site" evidence="1">
    <location>
        <position position="159"/>
    </location>
    <ligand>
        <name>Zn(2+)</name>
        <dbReference type="ChEBI" id="CHEBI:29105"/>
        <label>2</label>
    </ligand>
</feature>
<feature type="binding site" evidence="1">
    <location>
        <position position="162"/>
    </location>
    <ligand>
        <name>Zn(2+)</name>
        <dbReference type="ChEBI" id="CHEBI:29105"/>
        <label>2</label>
    </ligand>
</feature>
<feature type="binding site" evidence="1">
    <location>
        <position position="185"/>
    </location>
    <ligand>
        <name>Zn(2+)</name>
        <dbReference type="ChEBI" id="CHEBI:29105"/>
        <label>2</label>
    </ligand>
</feature>
<feature type="binding site" evidence="1">
    <location>
        <position position="188"/>
    </location>
    <ligand>
        <name>Zn(2+)</name>
        <dbReference type="ChEBI" id="CHEBI:29105"/>
        <label>2</label>
    </ligand>
</feature>
<feature type="binding site" evidence="1">
    <location>
        <position position="199"/>
    </location>
    <ligand>
        <name>Zn(2+)</name>
        <dbReference type="ChEBI" id="CHEBI:29105"/>
        <label>1</label>
    </ligand>
</feature>
<feature type="binding site" evidence="1">
    <location>
        <position position="202"/>
    </location>
    <ligand>
        <name>Zn(2+)</name>
        <dbReference type="ChEBI" id="CHEBI:29105"/>
        <label>1</label>
    </ligand>
</feature>
<sequence>MKRDYYEVLGVGKGADADEIKKAYRKLARQYHPDVNKAADAEEKFKEVKEAYDVLSEPQKRAQYDRFGHQDPNQGFGGGGFDASGMGGFGDIFDMFFGGGGRRANPNAPRKGSDLQFGLSIEFTETVFGKETDVEIPKEAECDTCHGSGAKPGTGVETCKTCSGTGQQEVAANTPFGRIVNRRVCTTCEGKGKVFKEKCSSCRGSGRVKVRRKIHLNIPAGVDDGAQLRVTGEGEPGVNGGPPGDLYVVLRVKSHEFFEREGNDIYCEVPLTYAQAALGDEIEVPTVDGRVKLKIPSGTQTETFFRLRGKGVPHLRGNGRGDQHVKVRVITPTKLSDKQKELLRELAELSGEKPGQHGGEDEGFFEKMKRAFRGE</sequence>
<dbReference type="EMBL" id="AB009842">
    <property type="protein sequence ID" value="BAA90474.1"/>
    <property type="molecule type" value="Genomic_DNA"/>
</dbReference>
<dbReference type="RefSeq" id="WP_203356537.1">
    <property type="nucleotide sequence ID" value="NZ_CP069127.1"/>
</dbReference>
<dbReference type="SMR" id="Q9LCQ4"/>
<dbReference type="STRING" id="54911.AN963_03940"/>
<dbReference type="GO" id="GO:0005737">
    <property type="term" value="C:cytoplasm"/>
    <property type="evidence" value="ECO:0007669"/>
    <property type="project" value="UniProtKB-SubCell"/>
</dbReference>
<dbReference type="GO" id="GO:0005524">
    <property type="term" value="F:ATP binding"/>
    <property type="evidence" value="ECO:0007669"/>
    <property type="project" value="InterPro"/>
</dbReference>
<dbReference type="GO" id="GO:0031072">
    <property type="term" value="F:heat shock protein binding"/>
    <property type="evidence" value="ECO:0007669"/>
    <property type="project" value="InterPro"/>
</dbReference>
<dbReference type="GO" id="GO:0051082">
    <property type="term" value="F:unfolded protein binding"/>
    <property type="evidence" value="ECO:0007669"/>
    <property type="project" value="UniProtKB-UniRule"/>
</dbReference>
<dbReference type="GO" id="GO:0008270">
    <property type="term" value="F:zinc ion binding"/>
    <property type="evidence" value="ECO:0007669"/>
    <property type="project" value="UniProtKB-UniRule"/>
</dbReference>
<dbReference type="GO" id="GO:0051085">
    <property type="term" value="P:chaperone cofactor-dependent protein refolding"/>
    <property type="evidence" value="ECO:0007669"/>
    <property type="project" value="TreeGrafter"/>
</dbReference>
<dbReference type="GO" id="GO:0006260">
    <property type="term" value="P:DNA replication"/>
    <property type="evidence" value="ECO:0007669"/>
    <property type="project" value="UniProtKB-KW"/>
</dbReference>
<dbReference type="GO" id="GO:0042026">
    <property type="term" value="P:protein refolding"/>
    <property type="evidence" value="ECO:0007669"/>
    <property type="project" value="TreeGrafter"/>
</dbReference>
<dbReference type="GO" id="GO:0009408">
    <property type="term" value="P:response to heat"/>
    <property type="evidence" value="ECO:0007669"/>
    <property type="project" value="InterPro"/>
</dbReference>
<dbReference type="CDD" id="cd06257">
    <property type="entry name" value="DnaJ"/>
    <property type="match status" value="1"/>
</dbReference>
<dbReference type="CDD" id="cd10747">
    <property type="entry name" value="DnaJ_C"/>
    <property type="match status" value="1"/>
</dbReference>
<dbReference type="CDD" id="cd10719">
    <property type="entry name" value="DnaJ_zf"/>
    <property type="match status" value="1"/>
</dbReference>
<dbReference type="FunFam" id="1.10.287.110:FF:000031">
    <property type="entry name" value="Molecular chaperone DnaJ"/>
    <property type="match status" value="1"/>
</dbReference>
<dbReference type="FunFam" id="2.10.230.10:FF:000002">
    <property type="entry name" value="Molecular chaperone DnaJ"/>
    <property type="match status" value="1"/>
</dbReference>
<dbReference type="FunFam" id="2.60.260.20:FF:000004">
    <property type="entry name" value="Molecular chaperone DnaJ"/>
    <property type="match status" value="1"/>
</dbReference>
<dbReference type="Gene3D" id="1.10.287.110">
    <property type="entry name" value="DnaJ domain"/>
    <property type="match status" value="1"/>
</dbReference>
<dbReference type="Gene3D" id="2.10.230.10">
    <property type="entry name" value="Heat shock protein DnaJ, cysteine-rich domain"/>
    <property type="match status" value="1"/>
</dbReference>
<dbReference type="Gene3D" id="2.60.260.20">
    <property type="entry name" value="Urease metallochaperone UreE, N-terminal domain"/>
    <property type="match status" value="2"/>
</dbReference>
<dbReference type="HAMAP" id="MF_01152">
    <property type="entry name" value="DnaJ"/>
    <property type="match status" value="1"/>
</dbReference>
<dbReference type="InterPro" id="IPR012724">
    <property type="entry name" value="DnaJ"/>
</dbReference>
<dbReference type="InterPro" id="IPR002939">
    <property type="entry name" value="DnaJ_C"/>
</dbReference>
<dbReference type="InterPro" id="IPR001623">
    <property type="entry name" value="DnaJ_domain"/>
</dbReference>
<dbReference type="InterPro" id="IPR008971">
    <property type="entry name" value="HSP40/DnaJ_pept-bd"/>
</dbReference>
<dbReference type="InterPro" id="IPR001305">
    <property type="entry name" value="HSP_DnaJ_Cys-rich_dom"/>
</dbReference>
<dbReference type="InterPro" id="IPR036410">
    <property type="entry name" value="HSP_DnaJ_Cys-rich_dom_sf"/>
</dbReference>
<dbReference type="InterPro" id="IPR036869">
    <property type="entry name" value="J_dom_sf"/>
</dbReference>
<dbReference type="NCBIfam" id="TIGR02349">
    <property type="entry name" value="DnaJ_bact"/>
    <property type="match status" value="1"/>
</dbReference>
<dbReference type="NCBIfam" id="NF008035">
    <property type="entry name" value="PRK10767.1"/>
    <property type="match status" value="1"/>
</dbReference>
<dbReference type="NCBIfam" id="NF010873">
    <property type="entry name" value="PRK14280.1"/>
    <property type="match status" value="1"/>
</dbReference>
<dbReference type="PANTHER" id="PTHR43096:SF48">
    <property type="entry name" value="CHAPERONE PROTEIN DNAJ"/>
    <property type="match status" value="1"/>
</dbReference>
<dbReference type="PANTHER" id="PTHR43096">
    <property type="entry name" value="DNAJ HOMOLOG 1, MITOCHONDRIAL-RELATED"/>
    <property type="match status" value="1"/>
</dbReference>
<dbReference type="Pfam" id="PF00226">
    <property type="entry name" value="DnaJ"/>
    <property type="match status" value="1"/>
</dbReference>
<dbReference type="Pfam" id="PF01556">
    <property type="entry name" value="DnaJ_C"/>
    <property type="match status" value="1"/>
</dbReference>
<dbReference type="Pfam" id="PF00684">
    <property type="entry name" value="DnaJ_CXXCXGXG"/>
    <property type="match status" value="1"/>
</dbReference>
<dbReference type="PRINTS" id="PR00625">
    <property type="entry name" value="JDOMAIN"/>
</dbReference>
<dbReference type="SMART" id="SM00271">
    <property type="entry name" value="DnaJ"/>
    <property type="match status" value="1"/>
</dbReference>
<dbReference type="SUPFAM" id="SSF46565">
    <property type="entry name" value="Chaperone J-domain"/>
    <property type="match status" value="1"/>
</dbReference>
<dbReference type="SUPFAM" id="SSF57938">
    <property type="entry name" value="DnaJ/Hsp40 cysteine-rich domain"/>
    <property type="match status" value="1"/>
</dbReference>
<dbReference type="SUPFAM" id="SSF49493">
    <property type="entry name" value="HSP40/DnaJ peptide-binding domain"/>
    <property type="match status" value="2"/>
</dbReference>
<dbReference type="PROSITE" id="PS50076">
    <property type="entry name" value="DNAJ_2"/>
    <property type="match status" value="1"/>
</dbReference>
<dbReference type="PROSITE" id="PS51188">
    <property type="entry name" value="ZF_CR"/>
    <property type="match status" value="1"/>
</dbReference>
<reference key="1">
    <citation type="journal article" date="1998" name="Biochim. Biophys. Acta">
        <title>Molecular cloning of the dnaK locus, and purification and characterization of a DnaK protein from Bacillus brevis HPD31.</title>
        <authorList>
            <person name="Tokunaga H."/>
            <person name="Yamakawa M."/>
            <person name="Mizukami M."/>
            <person name="Takagi H."/>
            <person name="Tokunaga M."/>
        </authorList>
    </citation>
    <scope>NUCLEOTIDE SEQUENCE [GENOMIC DNA]</scope>
    <source>
        <strain>HPD31</strain>
    </source>
</reference>
<proteinExistence type="inferred from homology"/>
<name>DNAJ_BRECH</name>
<protein>
    <recommendedName>
        <fullName evidence="1">Chaperone protein DnaJ</fullName>
    </recommendedName>
</protein>
<keyword id="KW-0143">Chaperone</keyword>
<keyword id="KW-0963">Cytoplasm</keyword>
<keyword id="KW-0235">DNA replication</keyword>
<keyword id="KW-0479">Metal-binding</keyword>
<keyword id="KW-0677">Repeat</keyword>
<keyword id="KW-0346">Stress response</keyword>
<keyword id="KW-0862">Zinc</keyword>
<keyword id="KW-0863">Zinc-finger</keyword>
<gene>
    <name evidence="1" type="primary">dnaJ</name>
</gene>